<name>CATV_NPVLD</name>
<sequence>MYANALVCLNPSFIKLQFHIVCTMNIIGIVTLALCSAASAADEGAAYNLQRAPDYFESFVENYNKNYTSDWEKNKRYSIFKDNLHEINAKNGNATDGPTATYKINKFSDLSKSELIAKFTGLSIPERVSNFCKTIILNQPPDKGPLHFDWREQNKVTSIKNQGACGACWAFATLASVESQFAMRHNRLIDLSEQQLIDCDSVDMGCNGGLLHTAFEEIMRMGGVQTELDYPFVGRNRRCGLDRHRPYVVSLVGCYRYVMVNEEKLKDLLRAVGPIPMAIDAADIVNYYRGVISSCENNGLNHAVLLVGYGVENGVPYWVFKNTWGDDWGENGYFRVRQNVNACGMVNDLASTAVLA</sequence>
<protein>
    <recommendedName>
        <fullName>Viral cathepsin</fullName>
        <shortName>V-cath</shortName>
        <ecNumber>3.4.22.50</ecNumber>
    </recommendedName>
    <alternativeName>
        <fullName>Cysteine proteinase</fullName>
        <shortName>CP</shortName>
    </alternativeName>
</protein>
<organismHost>
    <name type="scientific">Lepidoptera</name>
    <name type="common">butterflies and moths</name>
    <dbReference type="NCBI Taxonomy" id="7088"/>
</organismHost>
<organism>
    <name type="scientific">Lymantria dispar multicapsid nuclear polyhedrosis virus</name>
    <name type="common">LdMNPV</name>
    <dbReference type="NCBI Taxonomy" id="10449"/>
    <lineage>
        <taxon>Viruses</taxon>
        <taxon>Viruses incertae sedis</taxon>
        <taxon>Naldaviricetes</taxon>
        <taxon>Lefavirales</taxon>
        <taxon>Baculoviridae</taxon>
        <taxon>Alphabaculovirus</taxon>
        <taxon>Alphabaculovirus lydisparis</taxon>
    </lineage>
</organism>
<keyword id="KW-1015">Disulfide bond</keyword>
<keyword id="KW-0378">Hydrolase</keyword>
<keyword id="KW-0645">Protease</keyword>
<keyword id="KW-1185">Reference proteome</keyword>
<keyword id="KW-0732">Signal</keyword>
<keyword id="KW-0788">Thiol protease</keyword>
<keyword id="KW-0865">Zymogen</keyword>
<proteinExistence type="inferred from homology"/>
<evidence type="ECO:0000250" key="1"/>
<evidence type="ECO:0000255" key="2"/>
<evidence type="ECO:0000255" key="3">
    <source>
        <dbReference type="PROSITE-ProRule" id="PRU10088"/>
    </source>
</evidence>
<evidence type="ECO:0000255" key="4">
    <source>
        <dbReference type="PROSITE-ProRule" id="PRU10089"/>
    </source>
</evidence>
<evidence type="ECO:0000255" key="5">
    <source>
        <dbReference type="PROSITE-ProRule" id="PRU10090"/>
    </source>
</evidence>
<accession>Q9YMP9</accession>
<comment type="function">
    <text evidence="1">Cysteine protease that plays an essential role in host liquefaction to facilitate horizontal transmission of the virus. May participate in the degradation of foreign protein expressed by the baculovirus system (By similarity).</text>
</comment>
<comment type="catalytic activity">
    <reaction>
        <text>Endopeptidase of broad specificity, hydrolyzing substrates of both cathepsin L and cathepsin B.</text>
        <dbReference type="EC" id="3.4.22.50"/>
    </reaction>
</comment>
<comment type="PTM">
    <text evidence="1">Synthesized as an inactive proenzyme and activated by proteolytic removal of the inhibitory propeptide.</text>
</comment>
<comment type="similarity">
    <text evidence="3 4 5">Belongs to the peptidase C1 family.</text>
</comment>
<gene>
    <name type="primary">VCATH</name>
</gene>
<feature type="signal peptide" evidence="2">
    <location>
        <begin position="1"/>
        <end position="40"/>
    </location>
</feature>
<feature type="propeptide" id="PRO_0000322212" description="Activation peptide" evidence="2">
    <location>
        <begin position="41"/>
        <end position="144"/>
    </location>
</feature>
<feature type="chain" id="PRO_0000050582" description="Viral cathepsin">
    <location>
        <begin position="145"/>
        <end position="356"/>
    </location>
</feature>
<feature type="active site" evidence="1">
    <location>
        <position position="168"/>
    </location>
</feature>
<feature type="active site" evidence="1">
    <location>
        <position position="302"/>
    </location>
</feature>
<feature type="active site" evidence="1">
    <location>
        <position position="322"/>
    </location>
</feature>
<feature type="disulfide bond" evidence="1">
    <location>
        <begin position="165"/>
        <end position="206"/>
    </location>
</feature>
<feature type="disulfide bond" evidence="1">
    <location>
        <begin position="199"/>
        <end position="239"/>
    </location>
</feature>
<feature type="disulfide bond" evidence="1">
    <location>
        <begin position="295"/>
        <end position="343"/>
    </location>
</feature>
<reference key="1">
    <citation type="journal article" date="1999" name="Virology">
        <title>Sequence and analysis of the genome of a baculovirus pathogenic for Lymantria dispar.</title>
        <authorList>
            <person name="Kuzio J."/>
            <person name="Pearson M.N."/>
            <person name="Harwood S.H."/>
            <person name="Funk C.J."/>
            <person name="Evans J.T."/>
            <person name="Slavicek J.M."/>
            <person name="Rohrmann G.F."/>
        </authorList>
    </citation>
    <scope>NUCLEOTIDE SEQUENCE [LARGE SCALE GENOMIC DNA]</scope>
    <source>
        <strain>Isolate Cl 5-6</strain>
    </source>
</reference>
<dbReference type="EC" id="3.4.22.50"/>
<dbReference type="EMBL" id="AF081810">
    <property type="protein sequence ID" value="AAC70264.1"/>
    <property type="molecule type" value="Genomic_DNA"/>
</dbReference>
<dbReference type="PIR" id="T30426">
    <property type="entry name" value="T30426"/>
</dbReference>
<dbReference type="RefSeq" id="NP_047715.1">
    <property type="nucleotide sequence ID" value="NC_001973.1"/>
</dbReference>
<dbReference type="SMR" id="Q9YMP9"/>
<dbReference type="MEROPS" id="C01.083"/>
<dbReference type="KEGG" id="vg:1488519"/>
<dbReference type="OrthoDB" id="4752at10239"/>
<dbReference type="Proteomes" id="UP000203997">
    <property type="component" value="Genome"/>
</dbReference>
<dbReference type="GO" id="GO:0008234">
    <property type="term" value="F:cysteine-type peptidase activity"/>
    <property type="evidence" value="ECO:0007669"/>
    <property type="project" value="UniProtKB-KW"/>
</dbReference>
<dbReference type="GO" id="GO:0006508">
    <property type="term" value="P:proteolysis"/>
    <property type="evidence" value="ECO:0007669"/>
    <property type="project" value="UniProtKB-KW"/>
</dbReference>
<dbReference type="CDD" id="cd02248">
    <property type="entry name" value="Peptidase_C1A"/>
    <property type="match status" value="1"/>
</dbReference>
<dbReference type="Gene3D" id="3.90.70.10">
    <property type="entry name" value="Cysteine proteinases"/>
    <property type="match status" value="1"/>
</dbReference>
<dbReference type="InterPro" id="IPR038765">
    <property type="entry name" value="Papain-like_cys_pep_sf"/>
</dbReference>
<dbReference type="InterPro" id="IPR025661">
    <property type="entry name" value="Pept_asp_AS"/>
</dbReference>
<dbReference type="InterPro" id="IPR000169">
    <property type="entry name" value="Pept_cys_AS"/>
</dbReference>
<dbReference type="InterPro" id="IPR025660">
    <property type="entry name" value="Pept_his_AS"/>
</dbReference>
<dbReference type="InterPro" id="IPR013128">
    <property type="entry name" value="Peptidase_C1A"/>
</dbReference>
<dbReference type="InterPro" id="IPR000668">
    <property type="entry name" value="Peptidase_C1A_C"/>
</dbReference>
<dbReference type="InterPro" id="IPR039417">
    <property type="entry name" value="Peptidase_C1A_papain-like"/>
</dbReference>
<dbReference type="InterPro" id="IPR013201">
    <property type="entry name" value="Prot_inhib_I29"/>
</dbReference>
<dbReference type="PANTHER" id="PTHR12411">
    <property type="entry name" value="CYSTEINE PROTEASE FAMILY C1-RELATED"/>
    <property type="match status" value="1"/>
</dbReference>
<dbReference type="Pfam" id="PF08246">
    <property type="entry name" value="Inhibitor_I29"/>
    <property type="match status" value="1"/>
</dbReference>
<dbReference type="Pfam" id="PF00112">
    <property type="entry name" value="Peptidase_C1"/>
    <property type="match status" value="1"/>
</dbReference>
<dbReference type="PRINTS" id="PR00705">
    <property type="entry name" value="PAPAIN"/>
</dbReference>
<dbReference type="SMART" id="SM00848">
    <property type="entry name" value="Inhibitor_I29"/>
    <property type="match status" value="1"/>
</dbReference>
<dbReference type="SMART" id="SM00645">
    <property type="entry name" value="Pept_C1"/>
    <property type="match status" value="1"/>
</dbReference>
<dbReference type="SUPFAM" id="SSF54001">
    <property type="entry name" value="Cysteine proteinases"/>
    <property type="match status" value="1"/>
</dbReference>
<dbReference type="PROSITE" id="PS00640">
    <property type="entry name" value="THIOL_PROTEASE_ASN"/>
    <property type="match status" value="1"/>
</dbReference>
<dbReference type="PROSITE" id="PS00139">
    <property type="entry name" value="THIOL_PROTEASE_CYS"/>
    <property type="match status" value="1"/>
</dbReference>
<dbReference type="PROSITE" id="PS00639">
    <property type="entry name" value="THIOL_PROTEASE_HIS"/>
    <property type="match status" value="1"/>
</dbReference>